<protein>
    <recommendedName>
        <fullName evidence="1">Proline--tRNA ligase</fullName>
        <ecNumber evidence="1">6.1.1.15</ecNumber>
    </recommendedName>
    <alternativeName>
        <fullName evidence="1">Prolyl-tRNA synthetase</fullName>
        <shortName evidence="1">ProRS</shortName>
    </alternativeName>
</protein>
<keyword id="KW-0030">Aminoacyl-tRNA synthetase</keyword>
<keyword id="KW-0067">ATP-binding</keyword>
<keyword id="KW-0963">Cytoplasm</keyword>
<keyword id="KW-0436">Ligase</keyword>
<keyword id="KW-0547">Nucleotide-binding</keyword>
<keyword id="KW-0648">Protein biosynthesis</keyword>
<accession>Q03MK9</accession>
<dbReference type="EC" id="6.1.1.15" evidence="1"/>
<dbReference type="EMBL" id="CP000419">
    <property type="protein sequence ID" value="ABJ65563.1"/>
    <property type="status" value="ALT_INIT"/>
    <property type="molecule type" value="Genomic_DNA"/>
</dbReference>
<dbReference type="RefSeq" id="WP_011680686.1">
    <property type="nucleotide sequence ID" value="NC_008532.1"/>
</dbReference>
<dbReference type="SMR" id="Q03MK9"/>
<dbReference type="KEGG" id="ste:STER_0247"/>
<dbReference type="HOGENOM" id="CLU_016739_0_0_9"/>
<dbReference type="GO" id="GO:0005829">
    <property type="term" value="C:cytosol"/>
    <property type="evidence" value="ECO:0007669"/>
    <property type="project" value="TreeGrafter"/>
</dbReference>
<dbReference type="GO" id="GO:0002161">
    <property type="term" value="F:aminoacyl-tRNA deacylase activity"/>
    <property type="evidence" value="ECO:0007669"/>
    <property type="project" value="InterPro"/>
</dbReference>
<dbReference type="GO" id="GO:0005524">
    <property type="term" value="F:ATP binding"/>
    <property type="evidence" value="ECO:0007669"/>
    <property type="project" value="UniProtKB-UniRule"/>
</dbReference>
<dbReference type="GO" id="GO:0140096">
    <property type="term" value="F:catalytic activity, acting on a protein"/>
    <property type="evidence" value="ECO:0007669"/>
    <property type="project" value="UniProtKB-ARBA"/>
</dbReference>
<dbReference type="GO" id="GO:0004827">
    <property type="term" value="F:proline-tRNA ligase activity"/>
    <property type="evidence" value="ECO:0007669"/>
    <property type="project" value="UniProtKB-UniRule"/>
</dbReference>
<dbReference type="GO" id="GO:0016740">
    <property type="term" value="F:transferase activity"/>
    <property type="evidence" value="ECO:0007669"/>
    <property type="project" value="UniProtKB-ARBA"/>
</dbReference>
<dbReference type="GO" id="GO:0006433">
    <property type="term" value="P:prolyl-tRNA aminoacylation"/>
    <property type="evidence" value="ECO:0007669"/>
    <property type="project" value="UniProtKB-UniRule"/>
</dbReference>
<dbReference type="CDD" id="cd04334">
    <property type="entry name" value="ProRS-INS"/>
    <property type="match status" value="1"/>
</dbReference>
<dbReference type="CDD" id="cd00861">
    <property type="entry name" value="ProRS_anticodon_short"/>
    <property type="match status" value="1"/>
</dbReference>
<dbReference type="FunFam" id="3.40.50.800:FF:000011">
    <property type="entry name" value="Proline--tRNA ligase"/>
    <property type="match status" value="1"/>
</dbReference>
<dbReference type="Gene3D" id="3.40.50.800">
    <property type="entry name" value="Anticodon-binding domain"/>
    <property type="match status" value="1"/>
</dbReference>
<dbReference type="Gene3D" id="3.30.930.10">
    <property type="entry name" value="Bira Bifunctional Protein, Domain 2"/>
    <property type="match status" value="2"/>
</dbReference>
<dbReference type="Gene3D" id="3.90.960.10">
    <property type="entry name" value="YbaK/aminoacyl-tRNA synthetase-associated domain"/>
    <property type="match status" value="1"/>
</dbReference>
<dbReference type="HAMAP" id="MF_01569">
    <property type="entry name" value="Pro_tRNA_synth_type1"/>
    <property type="match status" value="1"/>
</dbReference>
<dbReference type="InterPro" id="IPR002314">
    <property type="entry name" value="aa-tRNA-synt_IIb"/>
</dbReference>
<dbReference type="InterPro" id="IPR006195">
    <property type="entry name" value="aa-tRNA-synth_II"/>
</dbReference>
<dbReference type="InterPro" id="IPR045864">
    <property type="entry name" value="aa-tRNA-synth_II/BPL/LPL"/>
</dbReference>
<dbReference type="InterPro" id="IPR004154">
    <property type="entry name" value="Anticodon-bd"/>
</dbReference>
<dbReference type="InterPro" id="IPR036621">
    <property type="entry name" value="Anticodon-bd_dom_sf"/>
</dbReference>
<dbReference type="InterPro" id="IPR002316">
    <property type="entry name" value="Pro-tRNA-ligase_IIa"/>
</dbReference>
<dbReference type="InterPro" id="IPR004500">
    <property type="entry name" value="Pro-tRNA-synth_IIa_bac-type"/>
</dbReference>
<dbReference type="InterPro" id="IPR023717">
    <property type="entry name" value="Pro-tRNA-Synthase_IIa_type1"/>
</dbReference>
<dbReference type="InterPro" id="IPR050062">
    <property type="entry name" value="Pro-tRNA_synthetase"/>
</dbReference>
<dbReference type="InterPro" id="IPR044140">
    <property type="entry name" value="ProRS_anticodon_short"/>
</dbReference>
<dbReference type="InterPro" id="IPR036754">
    <property type="entry name" value="YbaK/aa-tRNA-synt-asso_dom_sf"/>
</dbReference>
<dbReference type="InterPro" id="IPR007214">
    <property type="entry name" value="YbaK/aa-tRNA-synth-assoc-dom"/>
</dbReference>
<dbReference type="NCBIfam" id="NF006625">
    <property type="entry name" value="PRK09194.1"/>
    <property type="match status" value="1"/>
</dbReference>
<dbReference type="NCBIfam" id="TIGR00409">
    <property type="entry name" value="proS_fam_II"/>
    <property type="match status" value="2"/>
</dbReference>
<dbReference type="PANTHER" id="PTHR42753">
    <property type="entry name" value="MITOCHONDRIAL RIBOSOME PROTEIN L39/PROLYL-TRNA LIGASE FAMILY MEMBER"/>
    <property type="match status" value="1"/>
</dbReference>
<dbReference type="PANTHER" id="PTHR42753:SF2">
    <property type="entry name" value="PROLINE--TRNA LIGASE"/>
    <property type="match status" value="1"/>
</dbReference>
<dbReference type="Pfam" id="PF03129">
    <property type="entry name" value="HGTP_anticodon"/>
    <property type="match status" value="1"/>
</dbReference>
<dbReference type="Pfam" id="PF00587">
    <property type="entry name" value="tRNA-synt_2b"/>
    <property type="match status" value="1"/>
</dbReference>
<dbReference type="Pfam" id="PF04073">
    <property type="entry name" value="tRNA_edit"/>
    <property type="match status" value="1"/>
</dbReference>
<dbReference type="PRINTS" id="PR01046">
    <property type="entry name" value="TRNASYNTHPRO"/>
</dbReference>
<dbReference type="SUPFAM" id="SSF52954">
    <property type="entry name" value="Class II aaRS ABD-related"/>
    <property type="match status" value="1"/>
</dbReference>
<dbReference type="SUPFAM" id="SSF55681">
    <property type="entry name" value="Class II aaRS and biotin synthetases"/>
    <property type="match status" value="1"/>
</dbReference>
<dbReference type="SUPFAM" id="SSF55826">
    <property type="entry name" value="YbaK/ProRS associated domain"/>
    <property type="match status" value="1"/>
</dbReference>
<dbReference type="PROSITE" id="PS50862">
    <property type="entry name" value="AA_TRNA_LIGASE_II"/>
    <property type="match status" value="1"/>
</dbReference>
<feature type="chain" id="PRO_0000288384" description="Proline--tRNA ligase">
    <location>
        <begin position="1"/>
        <end position="620"/>
    </location>
</feature>
<reference key="1">
    <citation type="journal article" date="2006" name="Proc. Natl. Acad. Sci. U.S.A.">
        <title>Comparative genomics of the lactic acid bacteria.</title>
        <authorList>
            <person name="Makarova K.S."/>
            <person name="Slesarev A."/>
            <person name="Wolf Y.I."/>
            <person name="Sorokin A."/>
            <person name="Mirkin B."/>
            <person name="Koonin E.V."/>
            <person name="Pavlov A."/>
            <person name="Pavlova N."/>
            <person name="Karamychev V."/>
            <person name="Polouchine N."/>
            <person name="Shakhova V."/>
            <person name="Grigoriev I."/>
            <person name="Lou Y."/>
            <person name="Rohksar D."/>
            <person name="Lucas S."/>
            <person name="Huang K."/>
            <person name="Goodstein D.M."/>
            <person name="Hawkins T."/>
            <person name="Plengvidhya V."/>
            <person name="Welker D."/>
            <person name="Hughes J."/>
            <person name="Goh Y."/>
            <person name="Benson A."/>
            <person name="Baldwin K."/>
            <person name="Lee J.-H."/>
            <person name="Diaz-Muniz I."/>
            <person name="Dosti B."/>
            <person name="Smeianov V."/>
            <person name="Wechter W."/>
            <person name="Barabote R."/>
            <person name="Lorca G."/>
            <person name="Altermann E."/>
            <person name="Barrangou R."/>
            <person name="Ganesan B."/>
            <person name="Xie Y."/>
            <person name="Rawsthorne H."/>
            <person name="Tamir D."/>
            <person name="Parker C."/>
            <person name="Breidt F."/>
            <person name="Broadbent J.R."/>
            <person name="Hutkins R."/>
            <person name="O'Sullivan D."/>
            <person name="Steele J."/>
            <person name="Unlu G."/>
            <person name="Saier M.H. Jr."/>
            <person name="Klaenhammer T."/>
            <person name="Richardson P."/>
            <person name="Kozyavkin S."/>
            <person name="Weimer B.C."/>
            <person name="Mills D.A."/>
        </authorList>
    </citation>
    <scope>NUCLEOTIDE SEQUENCE [LARGE SCALE GENOMIC DNA]</scope>
    <source>
        <strain>ATCC BAA-491 / LMD-9</strain>
    </source>
</reference>
<name>SYP_STRTD</name>
<comment type="function">
    <text evidence="1">Catalyzes the attachment of proline to tRNA(Pro) in a two-step reaction: proline is first activated by ATP to form Pro-AMP and then transferred to the acceptor end of tRNA(Pro). As ProRS can inadvertently accommodate and process non-cognate amino acids such as alanine and cysteine, to avoid such errors it has two additional distinct editing activities against alanine. One activity is designated as 'pretransfer' editing and involves the tRNA(Pro)-independent hydrolysis of activated Ala-AMP. The other activity is designated 'posttransfer' editing and involves deacylation of mischarged Ala-tRNA(Pro). The misacylated Cys-tRNA(Pro) is not edited by ProRS.</text>
</comment>
<comment type="catalytic activity">
    <reaction evidence="1">
        <text>tRNA(Pro) + L-proline + ATP = L-prolyl-tRNA(Pro) + AMP + diphosphate</text>
        <dbReference type="Rhea" id="RHEA:14305"/>
        <dbReference type="Rhea" id="RHEA-COMP:9700"/>
        <dbReference type="Rhea" id="RHEA-COMP:9702"/>
        <dbReference type="ChEBI" id="CHEBI:30616"/>
        <dbReference type="ChEBI" id="CHEBI:33019"/>
        <dbReference type="ChEBI" id="CHEBI:60039"/>
        <dbReference type="ChEBI" id="CHEBI:78442"/>
        <dbReference type="ChEBI" id="CHEBI:78532"/>
        <dbReference type="ChEBI" id="CHEBI:456215"/>
        <dbReference type="EC" id="6.1.1.15"/>
    </reaction>
</comment>
<comment type="subunit">
    <text evidence="1">Homodimer.</text>
</comment>
<comment type="subcellular location">
    <subcellularLocation>
        <location evidence="1">Cytoplasm</location>
    </subcellularLocation>
</comment>
<comment type="domain">
    <text evidence="1">Consists of three domains: the N-terminal catalytic domain, the editing domain and the C-terminal anticodon-binding domain.</text>
</comment>
<comment type="similarity">
    <text evidence="1">Belongs to the class-II aminoacyl-tRNA synthetase family. ProS type 1 subfamily.</text>
</comment>
<comment type="sequence caution" evidence="2">
    <conflict type="erroneous initiation">
        <sequence resource="EMBL-CDS" id="ABJ65563"/>
    </conflict>
</comment>
<sequence>MKQSKMLIPTLREMPSDAQVISHALMVRAGYVRQVSAGIYAYMPLANRAIEKFKTIMREEFEKIGAVEMLAPALLTADLWRESGRYETYGEDLYKLKNRDNSDFILGPTHEETFTVLVRDAVKSYKQLPLNLYQIQSKYRDEKRPRNGLLRTREFIMKDAYSFHQNYEDLDVTYEDYRKAYEAIFTRAGLEFKAIIGDGGAMGGKDSQEFMAVTPERTDLNRWVVLDKSIASLDEIPEDVMEEIKNELTSWLVAGEDTIAYSTESSYAANLEMATNAYTPATKVVTQEEVSRVETPGCKSIDDVAAFLNIPEEQTIKTLLFTADDEPVVALLVGNDQVNDVKLKNYLAADFLKPATEDEARQVFGANFGSLGPVNLPENVRIIADRKVQDVANAVVGANEDGYHLTGVNPERDFKAEYVDIRKVKEGEISPDGQGVLQFARGIEIGHIFKLGTRYSESMGANVLDENGRAVPIIMGCYGIGVSRILSAVIEQHARLFVNKTPKGQYRYAWGINFPKELAPYDVHLITVNTKDEEANALTDRLEAALAAEGYDVLIDDRNERVGSKFSDSDLIGLPIRVTVGKKASEGVVEVKIKATGDTIEVNADNLIETLAILTTEQDA</sequence>
<evidence type="ECO:0000255" key="1">
    <source>
        <dbReference type="HAMAP-Rule" id="MF_01569"/>
    </source>
</evidence>
<evidence type="ECO:0000305" key="2"/>
<organism>
    <name type="scientific">Streptococcus thermophilus (strain ATCC BAA-491 / LMD-9)</name>
    <dbReference type="NCBI Taxonomy" id="322159"/>
    <lineage>
        <taxon>Bacteria</taxon>
        <taxon>Bacillati</taxon>
        <taxon>Bacillota</taxon>
        <taxon>Bacilli</taxon>
        <taxon>Lactobacillales</taxon>
        <taxon>Streptococcaceae</taxon>
        <taxon>Streptococcus</taxon>
    </lineage>
</organism>
<proteinExistence type="inferred from homology"/>
<gene>
    <name evidence="1" type="primary">proS</name>
    <name type="ordered locus">STER_0247</name>
</gene>